<gene>
    <name evidence="1" type="primary">rpoB</name>
    <name type="ordered locus">TP_0241</name>
</gene>
<reference key="1">
    <citation type="journal article" date="1998" name="Science">
        <title>Complete genome sequence of Treponema pallidum, the syphilis spirochete.</title>
        <authorList>
            <person name="Fraser C.M."/>
            <person name="Norris S.J."/>
            <person name="Weinstock G.M."/>
            <person name="White O."/>
            <person name="Sutton G.G."/>
            <person name="Dodson R.J."/>
            <person name="Gwinn M.L."/>
            <person name="Hickey E.K."/>
            <person name="Clayton R.A."/>
            <person name="Ketchum K.A."/>
            <person name="Sodergren E."/>
            <person name="Hardham J.M."/>
            <person name="McLeod M.P."/>
            <person name="Salzberg S.L."/>
            <person name="Peterson J.D."/>
            <person name="Khalak H.G."/>
            <person name="Richardson D.L."/>
            <person name="Howell J.K."/>
            <person name="Chidambaram M."/>
            <person name="Utterback T.R."/>
            <person name="McDonald L.A."/>
            <person name="Artiach P."/>
            <person name="Bowman C."/>
            <person name="Cotton M.D."/>
            <person name="Fujii C."/>
            <person name="Garland S.A."/>
            <person name="Hatch B."/>
            <person name="Horst K."/>
            <person name="Roberts K.M."/>
            <person name="Sandusky M."/>
            <person name="Weidman J.F."/>
            <person name="Smith H.O."/>
            <person name="Venter J.C."/>
        </authorList>
    </citation>
    <scope>NUCLEOTIDE SEQUENCE [LARGE SCALE GENOMIC DNA]</scope>
    <source>
        <strain>Nichols</strain>
    </source>
</reference>
<name>RPOB_TREPA</name>
<proteinExistence type="inferred from homology"/>
<dbReference type="EC" id="2.7.7.6" evidence="1"/>
<dbReference type="EMBL" id="AE000520">
    <property type="protein sequence ID" value="AAC65229.1"/>
    <property type="molecule type" value="Genomic_DNA"/>
</dbReference>
<dbReference type="PIR" id="C71350">
    <property type="entry name" value="C71350"/>
</dbReference>
<dbReference type="RefSeq" id="WP_010881689.1">
    <property type="nucleotide sequence ID" value="NC_021490.2"/>
</dbReference>
<dbReference type="SMR" id="O83269"/>
<dbReference type="STRING" id="243276.TP_0241"/>
<dbReference type="EnsemblBacteria" id="AAC65229">
    <property type="protein sequence ID" value="AAC65229"/>
    <property type="gene ID" value="TP_0241"/>
</dbReference>
<dbReference type="GeneID" id="93876033"/>
<dbReference type="KEGG" id="tpa:TP_0241"/>
<dbReference type="KEGG" id="tpw:TPANIC_0241"/>
<dbReference type="eggNOG" id="COG0085">
    <property type="taxonomic scope" value="Bacteria"/>
</dbReference>
<dbReference type="HOGENOM" id="CLU_000524_4_1_12"/>
<dbReference type="OrthoDB" id="9803954at2"/>
<dbReference type="Proteomes" id="UP000000811">
    <property type="component" value="Chromosome"/>
</dbReference>
<dbReference type="GO" id="GO:0000428">
    <property type="term" value="C:DNA-directed RNA polymerase complex"/>
    <property type="evidence" value="ECO:0007669"/>
    <property type="project" value="UniProtKB-KW"/>
</dbReference>
<dbReference type="GO" id="GO:0003677">
    <property type="term" value="F:DNA binding"/>
    <property type="evidence" value="ECO:0007669"/>
    <property type="project" value="UniProtKB-UniRule"/>
</dbReference>
<dbReference type="GO" id="GO:0003899">
    <property type="term" value="F:DNA-directed RNA polymerase activity"/>
    <property type="evidence" value="ECO:0007669"/>
    <property type="project" value="UniProtKB-UniRule"/>
</dbReference>
<dbReference type="GO" id="GO:0032549">
    <property type="term" value="F:ribonucleoside binding"/>
    <property type="evidence" value="ECO:0007669"/>
    <property type="project" value="InterPro"/>
</dbReference>
<dbReference type="GO" id="GO:0006351">
    <property type="term" value="P:DNA-templated transcription"/>
    <property type="evidence" value="ECO:0007669"/>
    <property type="project" value="UniProtKB-UniRule"/>
</dbReference>
<dbReference type="CDD" id="cd00653">
    <property type="entry name" value="RNA_pol_B_RPB2"/>
    <property type="match status" value="1"/>
</dbReference>
<dbReference type="Gene3D" id="2.40.50.100">
    <property type="match status" value="1"/>
</dbReference>
<dbReference type="Gene3D" id="2.40.50.150">
    <property type="match status" value="1"/>
</dbReference>
<dbReference type="Gene3D" id="3.90.1100.10">
    <property type="match status" value="2"/>
</dbReference>
<dbReference type="Gene3D" id="2.40.270.10">
    <property type="entry name" value="DNA-directed RNA polymerase, subunit 2, domain 6"/>
    <property type="match status" value="1"/>
</dbReference>
<dbReference type="Gene3D" id="3.90.1800.10">
    <property type="entry name" value="RNA polymerase alpha subunit dimerisation domain"/>
    <property type="match status" value="1"/>
</dbReference>
<dbReference type="Gene3D" id="3.90.1110.10">
    <property type="entry name" value="RNA polymerase Rpb2, domain 2"/>
    <property type="match status" value="1"/>
</dbReference>
<dbReference type="HAMAP" id="MF_01321">
    <property type="entry name" value="RNApol_bact_RpoB"/>
    <property type="match status" value="1"/>
</dbReference>
<dbReference type="InterPro" id="IPR019462">
    <property type="entry name" value="DNA-dir_RNA_pol_bsu_external_1"/>
</dbReference>
<dbReference type="InterPro" id="IPR015712">
    <property type="entry name" value="DNA-dir_RNA_pol_su2"/>
</dbReference>
<dbReference type="InterPro" id="IPR007120">
    <property type="entry name" value="DNA-dir_RNAP_su2_dom"/>
</dbReference>
<dbReference type="InterPro" id="IPR037033">
    <property type="entry name" value="DNA-dir_RNAP_su2_hyb_sf"/>
</dbReference>
<dbReference type="InterPro" id="IPR010243">
    <property type="entry name" value="RNA_pol_bsu_bac"/>
</dbReference>
<dbReference type="InterPro" id="IPR007121">
    <property type="entry name" value="RNA_pol_bsu_CS"/>
</dbReference>
<dbReference type="InterPro" id="IPR007644">
    <property type="entry name" value="RNA_pol_bsu_protrusion"/>
</dbReference>
<dbReference type="InterPro" id="IPR007642">
    <property type="entry name" value="RNA_pol_Rpb2_2"/>
</dbReference>
<dbReference type="InterPro" id="IPR037034">
    <property type="entry name" value="RNA_pol_Rpb2_2_sf"/>
</dbReference>
<dbReference type="InterPro" id="IPR007645">
    <property type="entry name" value="RNA_pol_Rpb2_3"/>
</dbReference>
<dbReference type="InterPro" id="IPR007641">
    <property type="entry name" value="RNA_pol_Rpb2_7"/>
</dbReference>
<dbReference type="InterPro" id="IPR014724">
    <property type="entry name" value="RNA_pol_RPB2_OB-fold"/>
</dbReference>
<dbReference type="NCBIfam" id="NF001616">
    <property type="entry name" value="PRK00405.1"/>
    <property type="match status" value="1"/>
</dbReference>
<dbReference type="NCBIfam" id="TIGR02013">
    <property type="entry name" value="rpoB"/>
    <property type="match status" value="1"/>
</dbReference>
<dbReference type="PANTHER" id="PTHR20856">
    <property type="entry name" value="DNA-DIRECTED RNA POLYMERASE I SUBUNIT 2"/>
    <property type="match status" value="1"/>
</dbReference>
<dbReference type="Pfam" id="PF04563">
    <property type="entry name" value="RNA_pol_Rpb2_1"/>
    <property type="match status" value="1"/>
</dbReference>
<dbReference type="Pfam" id="PF04561">
    <property type="entry name" value="RNA_pol_Rpb2_2"/>
    <property type="match status" value="2"/>
</dbReference>
<dbReference type="Pfam" id="PF04565">
    <property type="entry name" value="RNA_pol_Rpb2_3"/>
    <property type="match status" value="1"/>
</dbReference>
<dbReference type="Pfam" id="PF10385">
    <property type="entry name" value="RNA_pol_Rpb2_45"/>
    <property type="match status" value="1"/>
</dbReference>
<dbReference type="Pfam" id="PF00562">
    <property type="entry name" value="RNA_pol_Rpb2_6"/>
    <property type="match status" value="1"/>
</dbReference>
<dbReference type="Pfam" id="PF04560">
    <property type="entry name" value="RNA_pol_Rpb2_7"/>
    <property type="match status" value="1"/>
</dbReference>
<dbReference type="SUPFAM" id="SSF64484">
    <property type="entry name" value="beta and beta-prime subunits of DNA dependent RNA-polymerase"/>
    <property type="match status" value="1"/>
</dbReference>
<dbReference type="PROSITE" id="PS01166">
    <property type="entry name" value="RNA_POL_BETA"/>
    <property type="match status" value="1"/>
</dbReference>
<feature type="chain" id="PRO_0000047987" description="DNA-directed RNA polymerase subunit beta">
    <location>
        <begin position="1"/>
        <end position="1178"/>
    </location>
</feature>
<evidence type="ECO:0000255" key="1">
    <source>
        <dbReference type="HAMAP-Rule" id="MF_01321"/>
    </source>
</evidence>
<protein>
    <recommendedName>
        <fullName evidence="1">DNA-directed RNA polymerase subunit beta</fullName>
        <shortName evidence="1">RNAP subunit beta</shortName>
        <ecNumber evidence="1">2.7.7.6</ecNumber>
    </recommendedName>
    <alternativeName>
        <fullName evidence="1">RNA polymerase subunit beta</fullName>
    </alternativeName>
    <alternativeName>
        <fullName evidence="1">Transcriptase subunit beta</fullName>
    </alternativeName>
</protein>
<comment type="function">
    <text evidence="1">DNA-dependent RNA polymerase catalyzes the transcription of DNA into RNA using the four ribonucleoside triphosphates as substrates.</text>
</comment>
<comment type="catalytic activity">
    <reaction evidence="1">
        <text>RNA(n) + a ribonucleoside 5'-triphosphate = RNA(n+1) + diphosphate</text>
        <dbReference type="Rhea" id="RHEA:21248"/>
        <dbReference type="Rhea" id="RHEA-COMP:14527"/>
        <dbReference type="Rhea" id="RHEA-COMP:17342"/>
        <dbReference type="ChEBI" id="CHEBI:33019"/>
        <dbReference type="ChEBI" id="CHEBI:61557"/>
        <dbReference type="ChEBI" id="CHEBI:140395"/>
        <dbReference type="EC" id="2.7.7.6"/>
    </reaction>
</comment>
<comment type="subunit">
    <text evidence="1">The RNAP catalytic core consists of 2 alpha, 1 beta, 1 beta' and 1 omega subunit. When a sigma factor is associated with the core the holoenzyme is formed, which can initiate transcription.</text>
</comment>
<comment type="similarity">
    <text evidence="1">Belongs to the RNA polymerase beta chain family.</text>
</comment>
<organism>
    <name type="scientific">Treponema pallidum (strain Nichols)</name>
    <dbReference type="NCBI Taxonomy" id="243276"/>
    <lineage>
        <taxon>Bacteria</taxon>
        <taxon>Pseudomonadati</taxon>
        <taxon>Spirochaetota</taxon>
        <taxon>Spirochaetia</taxon>
        <taxon>Spirochaetales</taxon>
        <taxon>Treponemataceae</taxon>
        <taxon>Treponema</taxon>
    </lineage>
</organism>
<sequence length="1178" mass="132447">MSARVCKTHRVYVGRDVRNFMDIPDLIEIQLRSYDTFLHGARNTPSGADTLISGTREELGLEDVFKTTFPIESSTGDMTLEYQSYSLDEKNIKFSEAECKQKGLTYAIPLKALVDLRFNNTGEIRRKDIYMGDIPKMTERGTFIINGAERVVVSQIHRSPGVVFSHEKDKEGREVFSSRIIPYRGSWLEFEIDQKKDLIYAKLDKKRRILGTVFLRALHYETREQIIEAFYAIEKTPVCQDRAEYELLTGKILARSVTVENEQGETRVLYKAGEKIHPHVIDDLLQNGICEVYIINLEAEGSLRSAVVINCLEREEMKFSKSGAQDELSREEALCIVYSALRPSDPMTMDAAEKDLQTMFFSPRRYDLGRVGRYKLNKKFRSDSPTTECTLTLDDIVNTMKFLIRMYSGDAQEDDIDHLGNRRIRSVGELMTNTLKTAFLRMERIAKERMSSKETETIKPQDLISIKPIMAAIKEFFGASQLSQFMDQVNPLAELTHKRRLNALGPGGLSRERAGFEVRDVHYTHYGRMCPIETPEGPNIGLIVSMANYARVNGYGFLEVPYVRVRDGVVTKEIEYLDAMDEDRYYIGQDSTAVGPDGVIRVDHVSCRHRGDYSTRSPKDIQYMDVSPKQIISVSASLIPFLEHDDANRALMGSNMQRQGVPLIFPEPPRVGTGMEEKCAYDSGVLVKAKQDGTVAYVSSEKIVVCSAAASGEEQEVVYPLLKYQRTNQDTCYHQRPIVHVGDRVQVGDALADGPATYRGELALGRNILVGFVPWNGYNYEDAILISHRVVKEDMFTSVHIKEFSTEVRETKLGSERMTNDIPNKSEKNLDNLDAEGIIRIGSKVRAGDVLIGKITPKSESETTPEFRLLNSIFGEKAKEVRDSSLRVPHGVEGTVIDVQRLRRSEGDDLNPGVSEVVKVLIATKRKLREGDKMAGRHGNKGIVARILPEEDMPYLDDGTPLDVCLNPLGVPSRMNIGQILESELGLAGLRLDEWYESPVFQSPSNEQIGEKLMQAGFPTNSKVMLRDGRTGDYFQNPVFVGVIYFMKLAHLVDDKMHARSTGPYSLVTQQPLGGKAQFGGQRLGEMEVWALEAYGAANTLQELLTIKSDDMHGRSKIYEAIVKGEASSPTGIPESFNVLVQELRGLALDFTIYDAKGKQIPLTERDEEMTNKIGSKF</sequence>
<keyword id="KW-0240">DNA-directed RNA polymerase</keyword>
<keyword id="KW-0548">Nucleotidyltransferase</keyword>
<keyword id="KW-1185">Reference proteome</keyword>
<keyword id="KW-0804">Transcription</keyword>
<keyword id="KW-0808">Transferase</keyword>
<accession>O83269</accession>